<organismHost>
    <name type="scientific">Otariidae</name>
    <name type="common">fur seals &amp; sea lions</name>
    <dbReference type="NCBI Taxonomy" id="9702"/>
</organismHost>
<organism>
    <name type="scientific">San Miguel sea lion virus serotype 1</name>
    <name type="common">SMSV-1</name>
    <name type="synonym">SMSV serotype 1</name>
    <dbReference type="NCBI Taxonomy" id="36406"/>
    <lineage>
        <taxon>Viruses</taxon>
        <taxon>Riboviria</taxon>
        <taxon>Orthornavirae</taxon>
        <taxon>Pisuviricota</taxon>
        <taxon>Pisoniviricetes</taxon>
        <taxon>Picornavirales</taxon>
        <taxon>Caliciviridae</taxon>
        <taxon>Vesivirus</taxon>
        <taxon>Vesicular exanthema of swine virus</taxon>
    </lineage>
</organism>
<keyword id="KW-1232">Capsid decoration protein</keyword>
<keyword id="KW-0167">Capsid protein</keyword>
<keyword id="KW-1035">Host cytoplasm</keyword>
<keyword id="KW-0946">Virion</keyword>
<gene>
    <name type="ORF">ORF3</name>
</gene>
<proteinExistence type="inferred from homology"/>
<name>VP2_SMSV1</name>
<comment type="function">
    <text evidence="1">Minor structural protein that forms a portal-like structure at a unique three-fold axis of symmetry, following binding to the host receptor. The channel formed by VP2 may allow the delivery of the viral genome through the host endosomal membrane.</text>
</comment>
<comment type="subunit">
    <text evidence="1">Homooligomer. The portal-like structure consists in 12 copies of VP2. Interacts with capsid protein VP1.</text>
</comment>
<comment type="subcellular location">
    <subcellularLocation>
        <location evidence="1">Virion</location>
    </subcellularLocation>
    <subcellularLocation>
        <location evidence="2">Host cytoplasm</location>
    </subcellularLocation>
</comment>
<comment type="domain">
    <text evidence="1">The N-terminus domain points away from the virion surface.</text>
</comment>
<comment type="miscellaneous">
    <text evidence="1">Translated by a ribosomal termination-reinitiation process from the bicistronic mRNA coding for VP1 and VP2.</text>
</comment>
<comment type="similarity">
    <text evidence="2">Belongs to the vesivirus VP2 protein family.</text>
</comment>
<protein>
    <recommendedName>
        <fullName>Minor capsid protein VP2</fullName>
    </recommendedName>
</protein>
<sequence>MNYANFGLELFKSIADAAYEGKRVELAGKTLALKNRALDTERDYNYARLAFEKQRFETNADLRVNGDLYRMQALRAAGYRLNPFSNGHQIYADEAAAANLHSYYGFYKTD</sequence>
<accession>P36288</accession>
<reference key="1">
    <citation type="journal article" date="1992" name="Virus Res.">
        <title>Nucleotide sequence of the capsid protein gene of two serotypes of San Miguel sea lion virus: identification of conserved and non-conserved amino acid sequences among calicivirus capsid proteins.</title>
        <authorList>
            <person name="Neill J.D."/>
        </authorList>
    </citation>
    <scope>NUCLEOTIDE SEQUENCE [GENOMIC RNA]</scope>
</reference>
<evidence type="ECO:0000250" key="1">
    <source>
        <dbReference type="UniProtKB" id="P28711"/>
    </source>
</evidence>
<evidence type="ECO:0000305" key="2"/>
<feature type="chain" id="PRO_0000100126" description="Minor capsid protein VP2">
    <location>
        <begin position="1"/>
        <end position="110"/>
    </location>
</feature>
<dbReference type="EMBL" id="M87481">
    <property type="protein sequence ID" value="AAA16218.1"/>
    <property type="molecule type" value="Genomic_RNA"/>
</dbReference>
<dbReference type="PIR" id="B48562">
    <property type="entry name" value="B48562"/>
</dbReference>
<dbReference type="Proteomes" id="UP000007224">
    <property type="component" value="Genome"/>
</dbReference>
<dbReference type="GO" id="GO:0030430">
    <property type="term" value="C:host cell cytoplasm"/>
    <property type="evidence" value="ECO:0007669"/>
    <property type="project" value="UniProtKB-SubCell"/>
</dbReference>
<dbReference type="GO" id="GO:0098021">
    <property type="term" value="C:viral capsid, decoration"/>
    <property type="evidence" value="ECO:0007669"/>
    <property type="project" value="UniProtKB-KW"/>
</dbReference>
<dbReference type="InterPro" id="IPR007996">
    <property type="entry name" value="Vesivirus_VP2"/>
</dbReference>
<dbReference type="Pfam" id="PF05332">
    <property type="entry name" value="Vesi_VP2"/>
    <property type="match status" value="1"/>
</dbReference>